<reference key="1">
    <citation type="journal article" date="2007" name="PLoS ONE">
        <title>Complete genomic characterization of a pathogenic A.II strain of Francisella tularensis subspecies tularensis.</title>
        <authorList>
            <person name="Beckstrom-Sternberg S.M."/>
            <person name="Auerbach R.K."/>
            <person name="Godbole S."/>
            <person name="Pearson J.V."/>
            <person name="Beckstrom-Sternberg J.S."/>
            <person name="Deng Z."/>
            <person name="Munk C."/>
            <person name="Kubota K."/>
            <person name="Zhou Y."/>
            <person name="Bruce D."/>
            <person name="Noronha J."/>
            <person name="Scheuermann R.H."/>
            <person name="Wang A."/>
            <person name="Wei X."/>
            <person name="Wang J."/>
            <person name="Hao J."/>
            <person name="Wagner D.M."/>
            <person name="Brettin T.S."/>
            <person name="Brown N."/>
            <person name="Gilna P."/>
            <person name="Keim P.S."/>
        </authorList>
    </citation>
    <scope>NUCLEOTIDE SEQUENCE [LARGE SCALE GENOMIC DNA]</scope>
    <source>
        <strain>WY96-3418</strain>
    </source>
</reference>
<gene>
    <name evidence="1" type="primary">nuoH</name>
    <name type="ordered locus">FTW_0113</name>
</gene>
<evidence type="ECO:0000255" key="1">
    <source>
        <dbReference type="HAMAP-Rule" id="MF_01350"/>
    </source>
</evidence>
<keyword id="KW-0997">Cell inner membrane</keyword>
<keyword id="KW-1003">Cell membrane</keyword>
<keyword id="KW-0472">Membrane</keyword>
<keyword id="KW-0520">NAD</keyword>
<keyword id="KW-0874">Quinone</keyword>
<keyword id="KW-1278">Translocase</keyword>
<keyword id="KW-0812">Transmembrane</keyword>
<keyword id="KW-1133">Transmembrane helix</keyword>
<keyword id="KW-0830">Ubiquinone</keyword>
<protein>
    <recommendedName>
        <fullName evidence="1">NADH-quinone oxidoreductase subunit H</fullName>
        <ecNumber evidence="1">7.1.1.-</ecNumber>
    </recommendedName>
    <alternativeName>
        <fullName evidence="1">NADH dehydrogenase I subunit H</fullName>
    </alternativeName>
    <alternativeName>
        <fullName evidence="1">NDH-1 subunit H</fullName>
    </alternativeName>
</protein>
<name>NUOH_FRATW</name>
<organism>
    <name type="scientific">Francisella tularensis subsp. tularensis (strain WY96-3418)</name>
    <dbReference type="NCBI Taxonomy" id="418136"/>
    <lineage>
        <taxon>Bacteria</taxon>
        <taxon>Pseudomonadati</taxon>
        <taxon>Pseudomonadota</taxon>
        <taxon>Gammaproteobacteria</taxon>
        <taxon>Thiotrichales</taxon>
        <taxon>Francisellaceae</taxon>
        <taxon>Francisella</taxon>
    </lineage>
</organism>
<sequence length="336" mass="37642">MLGYILWTSLYVLLIVIPLILVVAYYTYAERKVIGYMQDRIGPNRVGSFGLLQPIFDALKLFLKEIIVPTNSNRYLFFIAPILAFAPAYAAWAVIPFSKGVVLSDMNLGLLYILAMTSFSIYGIVIAGWASNSKYSLFGALRAGAQVISYELAMGFAIVGVVIAAGSMGITGIIEAQSGGIWHWYFIPLFPLFIVYFIAGIAETNRAPFDVVEGESEIVAGHHIEYTGSRFALFFLAEYANMILISILTSIMFLGGWNSPFQATALESIFGFVPGVVWLFAKTGIFMFMFLWVRATYPRYRYDQIMRLGWKIFIPLTFVWVVIVACMVRLGVGPWW</sequence>
<dbReference type="EC" id="7.1.1.-" evidence="1"/>
<dbReference type="EMBL" id="CP000608">
    <property type="protein sequence ID" value="ABO46101.1"/>
    <property type="molecule type" value="Genomic_DNA"/>
</dbReference>
<dbReference type="RefSeq" id="WP_003017378.1">
    <property type="nucleotide sequence ID" value="NC_009257.1"/>
</dbReference>
<dbReference type="SMR" id="A4IVZ9"/>
<dbReference type="KEGG" id="ftw:FTW_0113"/>
<dbReference type="HOGENOM" id="CLU_015134_0_1_6"/>
<dbReference type="GO" id="GO:0005886">
    <property type="term" value="C:plasma membrane"/>
    <property type="evidence" value="ECO:0007669"/>
    <property type="project" value="UniProtKB-SubCell"/>
</dbReference>
<dbReference type="GO" id="GO:0003954">
    <property type="term" value="F:NADH dehydrogenase activity"/>
    <property type="evidence" value="ECO:0007669"/>
    <property type="project" value="TreeGrafter"/>
</dbReference>
<dbReference type="GO" id="GO:0016655">
    <property type="term" value="F:oxidoreductase activity, acting on NAD(P)H, quinone or similar compound as acceptor"/>
    <property type="evidence" value="ECO:0007669"/>
    <property type="project" value="UniProtKB-UniRule"/>
</dbReference>
<dbReference type="GO" id="GO:0048038">
    <property type="term" value="F:quinone binding"/>
    <property type="evidence" value="ECO:0007669"/>
    <property type="project" value="UniProtKB-KW"/>
</dbReference>
<dbReference type="GO" id="GO:0009060">
    <property type="term" value="P:aerobic respiration"/>
    <property type="evidence" value="ECO:0007669"/>
    <property type="project" value="TreeGrafter"/>
</dbReference>
<dbReference type="HAMAP" id="MF_01350">
    <property type="entry name" value="NDH1_NuoH"/>
    <property type="match status" value="1"/>
</dbReference>
<dbReference type="InterPro" id="IPR001694">
    <property type="entry name" value="NADH_UbQ_OxRdtase_su1/FPO"/>
</dbReference>
<dbReference type="InterPro" id="IPR018086">
    <property type="entry name" value="NADH_UbQ_OxRdtase_su1_CS"/>
</dbReference>
<dbReference type="NCBIfam" id="NF004741">
    <property type="entry name" value="PRK06076.1-2"/>
    <property type="match status" value="1"/>
</dbReference>
<dbReference type="PANTHER" id="PTHR11432">
    <property type="entry name" value="NADH DEHYDROGENASE SUBUNIT 1"/>
    <property type="match status" value="1"/>
</dbReference>
<dbReference type="PANTHER" id="PTHR11432:SF3">
    <property type="entry name" value="NADH-UBIQUINONE OXIDOREDUCTASE CHAIN 1"/>
    <property type="match status" value="1"/>
</dbReference>
<dbReference type="Pfam" id="PF00146">
    <property type="entry name" value="NADHdh"/>
    <property type="match status" value="1"/>
</dbReference>
<dbReference type="PROSITE" id="PS00667">
    <property type="entry name" value="COMPLEX1_ND1_1"/>
    <property type="match status" value="1"/>
</dbReference>
<dbReference type="PROSITE" id="PS00668">
    <property type="entry name" value="COMPLEX1_ND1_2"/>
    <property type="match status" value="1"/>
</dbReference>
<feature type="chain" id="PRO_0000298815" description="NADH-quinone oxidoreductase subunit H">
    <location>
        <begin position="1"/>
        <end position="336"/>
    </location>
</feature>
<feature type="transmembrane region" description="Helical" evidence="1">
    <location>
        <begin position="4"/>
        <end position="24"/>
    </location>
</feature>
<feature type="transmembrane region" description="Helical" evidence="1">
    <location>
        <begin position="75"/>
        <end position="95"/>
    </location>
</feature>
<feature type="transmembrane region" description="Helical" evidence="1">
    <location>
        <begin position="108"/>
        <end position="128"/>
    </location>
</feature>
<feature type="transmembrane region" description="Helical" evidence="1">
    <location>
        <begin position="154"/>
        <end position="174"/>
    </location>
</feature>
<feature type="transmembrane region" description="Helical" evidence="1">
    <location>
        <begin position="181"/>
        <end position="201"/>
    </location>
</feature>
<feature type="transmembrane region" description="Helical" evidence="1">
    <location>
        <begin position="233"/>
        <end position="253"/>
    </location>
</feature>
<feature type="transmembrane region" description="Helical" evidence="1">
    <location>
        <begin position="272"/>
        <end position="292"/>
    </location>
</feature>
<feature type="transmembrane region" description="Helical" evidence="1">
    <location>
        <begin position="308"/>
        <end position="328"/>
    </location>
</feature>
<comment type="function">
    <text evidence="1">NDH-1 shuttles electrons from NADH, via FMN and iron-sulfur (Fe-S) centers, to quinones in the respiratory chain. The immediate electron acceptor for the enzyme in this species is believed to be ubiquinone. Couples the redox reaction to proton translocation (for every two electrons transferred, four hydrogen ions are translocated across the cytoplasmic membrane), and thus conserves the redox energy in a proton gradient. This subunit may bind ubiquinone.</text>
</comment>
<comment type="catalytic activity">
    <reaction evidence="1">
        <text>a quinone + NADH + 5 H(+)(in) = a quinol + NAD(+) + 4 H(+)(out)</text>
        <dbReference type="Rhea" id="RHEA:57888"/>
        <dbReference type="ChEBI" id="CHEBI:15378"/>
        <dbReference type="ChEBI" id="CHEBI:24646"/>
        <dbReference type="ChEBI" id="CHEBI:57540"/>
        <dbReference type="ChEBI" id="CHEBI:57945"/>
        <dbReference type="ChEBI" id="CHEBI:132124"/>
    </reaction>
</comment>
<comment type="subunit">
    <text evidence="1">NDH-1 is composed of 14 different subunits. Subunits NuoA, H, J, K, L, M, N constitute the membrane sector of the complex.</text>
</comment>
<comment type="subcellular location">
    <subcellularLocation>
        <location evidence="1">Cell inner membrane</location>
        <topology evidence="1">Multi-pass membrane protein</topology>
    </subcellularLocation>
</comment>
<comment type="similarity">
    <text evidence="1">Belongs to the complex I subunit 1 family.</text>
</comment>
<accession>A4IVZ9</accession>
<proteinExistence type="inferred from homology"/>